<name>CIAO1_DANRE</name>
<reference key="1">
    <citation type="journal article" date="2013" name="Nature">
        <title>The zebrafish reference genome sequence and its relationship to the human genome.</title>
        <authorList>
            <person name="Howe K."/>
            <person name="Clark M.D."/>
            <person name="Torroja C.F."/>
            <person name="Torrance J."/>
            <person name="Berthelot C."/>
            <person name="Muffato M."/>
            <person name="Collins J.E."/>
            <person name="Humphray S."/>
            <person name="McLaren K."/>
            <person name="Matthews L."/>
            <person name="McLaren S."/>
            <person name="Sealy I."/>
            <person name="Caccamo M."/>
            <person name="Churcher C."/>
            <person name="Scott C."/>
            <person name="Barrett J.C."/>
            <person name="Koch R."/>
            <person name="Rauch G.J."/>
            <person name="White S."/>
            <person name="Chow W."/>
            <person name="Kilian B."/>
            <person name="Quintais L.T."/>
            <person name="Guerra-Assuncao J.A."/>
            <person name="Zhou Y."/>
            <person name="Gu Y."/>
            <person name="Yen J."/>
            <person name="Vogel J.H."/>
            <person name="Eyre T."/>
            <person name="Redmond S."/>
            <person name="Banerjee R."/>
            <person name="Chi J."/>
            <person name="Fu B."/>
            <person name="Langley E."/>
            <person name="Maguire S.F."/>
            <person name="Laird G.K."/>
            <person name="Lloyd D."/>
            <person name="Kenyon E."/>
            <person name="Donaldson S."/>
            <person name="Sehra H."/>
            <person name="Almeida-King J."/>
            <person name="Loveland J."/>
            <person name="Trevanion S."/>
            <person name="Jones M."/>
            <person name="Quail M."/>
            <person name="Willey D."/>
            <person name="Hunt A."/>
            <person name="Burton J."/>
            <person name="Sims S."/>
            <person name="McLay K."/>
            <person name="Plumb B."/>
            <person name="Davis J."/>
            <person name="Clee C."/>
            <person name="Oliver K."/>
            <person name="Clark R."/>
            <person name="Riddle C."/>
            <person name="Elliot D."/>
            <person name="Threadgold G."/>
            <person name="Harden G."/>
            <person name="Ware D."/>
            <person name="Begum S."/>
            <person name="Mortimore B."/>
            <person name="Kerry G."/>
            <person name="Heath P."/>
            <person name="Phillimore B."/>
            <person name="Tracey A."/>
            <person name="Corby N."/>
            <person name="Dunn M."/>
            <person name="Johnson C."/>
            <person name="Wood J."/>
            <person name="Clark S."/>
            <person name="Pelan S."/>
            <person name="Griffiths G."/>
            <person name="Smith M."/>
            <person name="Glithero R."/>
            <person name="Howden P."/>
            <person name="Barker N."/>
            <person name="Lloyd C."/>
            <person name="Stevens C."/>
            <person name="Harley J."/>
            <person name="Holt K."/>
            <person name="Panagiotidis G."/>
            <person name="Lovell J."/>
            <person name="Beasley H."/>
            <person name="Henderson C."/>
            <person name="Gordon D."/>
            <person name="Auger K."/>
            <person name="Wright D."/>
            <person name="Collins J."/>
            <person name="Raisen C."/>
            <person name="Dyer L."/>
            <person name="Leung K."/>
            <person name="Robertson L."/>
            <person name="Ambridge K."/>
            <person name="Leongamornlert D."/>
            <person name="McGuire S."/>
            <person name="Gilderthorp R."/>
            <person name="Griffiths C."/>
            <person name="Manthravadi D."/>
            <person name="Nichol S."/>
            <person name="Barker G."/>
            <person name="Whitehead S."/>
            <person name="Kay M."/>
            <person name="Brown J."/>
            <person name="Murnane C."/>
            <person name="Gray E."/>
            <person name="Humphries M."/>
            <person name="Sycamore N."/>
            <person name="Barker D."/>
            <person name="Saunders D."/>
            <person name="Wallis J."/>
            <person name="Babbage A."/>
            <person name="Hammond S."/>
            <person name="Mashreghi-Mohammadi M."/>
            <person name="Barr L."/>
            <person name="Martin S."/>
            <person name="Wray P."/>
            <person name="Ellington A."/>
            <person name="Matthews N."/>
            <person name="Ellwood M."/>
            <person name="Woodmansey R."/>
            <person name="Clark G."/>
            <person name="Cooper J."/>
            <person name="Tromans A."/>
            <person name="Grafham D."/>
            <person name="Skuce C."/>
            <person name="Pandian R."/>
            <person name="Andrews R."/>
            <person name="Harrison E."/>
            <person name="Kimberley A."/>
            <person name="Garnett J."/>
            <person name="Fosker N."/>
            <person name="Hall R."/>
            <person name="Garner P."/>
            <person name="Kelly D."/>
            <person name="Bird C."/>
            <person name="Palmer S."/>
            <person name="Gehring I."/>
            <person name="Berger A."/>
            <person name="Dooley C.M."/>
            <person name="Ersan-Urun Z."/>
            <person name="Eser C."/>
            <person name="Geiger H."/>
            <person name="Geisler M."/>
            <person name="Karotki L."/>
            <person name="Kirn A."/>
            <person name="Konantz J."/>
            <person name="Konantz M."/>
            <person name="Oberlander M."/>
            <person name="Rudolph-Geiger S."/>
            <person name="Teucke M."/>
            <person name="Lanz C."/>
            <person name="Raddatz G."/>
            <person name="Osoegawa K."/>
            <person name="Zhu B."/>
            <person name="Rapp A."/>
            <person name="Widaa S."/>
            <person name="Langford C."/>
            <person name="Yang F."/>
            <person name="Schuster S.C."/>
            <person name="Carter N.P."/>
            <person name="Harrow J."/>
            <person name="Ning Z."/>
            <person name="Herrero J."/>
            <person name="Searle S.M."/>
            <person name="Enright A."/>
            <person name="Geisler R."/>
            <person name="Plasterk R.H."/>
            <person name="Lee C."/>
            <person name="Westerfield M."/>
            <person name="de Jong P.J."/>
            <person name="Zon L.I."/>
            <person name="Postlethwait J.H."/>
            <person name="Nusslein-Volhard C."/>
            <person name="Hubbard T.J."/>
            <person name="Roest Crollius H."/>
            <person name="Rogers J."/>
            <person name="Stemple D.L."/>
        </authorList>
    </citation>
    <scope>NUCLEOTIDE SEQUENCE [LARGE SCALE GENOMIC DNA]</scope>
    <source>
        <strain>Tuebingen</strain>
    </source>
</reference>
<reference key="2">
    <citation type="submission" date="2004-01" db="EMBL/GenBank/DDBJ databases">
        <authorList>
            <consortium name="NIH - Zebrafish Gene Collection (ZGC) project"/>
        </authorList>
    </citation>
    <scope>NUCLEOTIDE SEQUENCE [LARGE SCALE MRNA]</scope>
    <source>
        <strain>AB</strain>
        <tissue>Embryo</tissue>
    </source>
</reference>
<keyword id="KW-1185">Reference proteome</keyword>
<keyword id="KW-0677">Repeat</keyword>
<keyword id="KW-0853">WD repeat</keyword>
<feature type="chain" id="PRO_0000281108" description="Probable cytosolic iron-sulfur protein assembly protein ciao1">
    <location>
        <begin position="1"/>
        <end position="330"/>
    </location>
</feature>
<feature type="repeat" description="WD 1">
    <location>
        <begin position="14"/>
        <end position="53"/>
    </location>
</feature>
<feature type="repeat" description="WD 2">
    <location>
        <begin position="59"/>
        <end position="98"/>
    </location>
</feature>
<feature type="repeat" description="WD 3">
    <location>
        <begin position="103"/>
        <end position="142"/>
    </location>
</feature>
<feature type="repeat" description="WD 4">
    <location>
        <begin position="148"/>
        <end position="187"/>
    </location>
</feature>
<feature type="repeat" description="WD 5">
    <location>
        <begin position="192"/>
        <end position="231"/>
    </location>
</feature>
<feature type="repeat" description="WD 6">
    <location>
        <begin position="244"/>
        <end position="283"/>
    </location>
</feature>
<feature type="repeat" description="WD 7">
    <location>
        <begin position="295"/>
        <end position="330"/>
    </location>
</feature>
<feature type="sequence conflict" description="In Ref. 2; AAH44534." evidence="2" ref="2">
    <original>D</original>
    <variation>G</variation>
    <location>
        <position position="181"/>
    </location>
</feature>
<feature type="sequence conflict" description="In Ref. 2; AAH44534." evidence="2" ref="2">
    <original>V</original>
    <variation>M</variation>
    <location>
        <position position="292"/>
    </location>
</feature>
<evidence type="ECO:0000255" key="1">
    <source>
        <dbReference type="HAMAP-Rule" id="MF_03037"/>
    </source>
</evidence>
<evidence type="ECO:0000305" key="2"/>
<sequence length="330" mass="36803">MKGALELQHRVSAHPDSRCWYVAWNPAGTTLATCGGDRAIRIWGKEGDSWECKCVLSDGHQRTVRKVAWSPCGKYLASASFDATTCIWKKTDEDFECLTVLEGHENEVKCVAWAPSGSLLATCSRDKSVWIWEVDEEDEYECLSVVNSHTQDVKHVVWHPTQELLASASYDNKICIYKEEDDDWECRATLEGHESTVWSLTFDPEGRRLASCSDDRTVKIWKESTTGDGSSDESWKCICTLSGFHGRTIYDIAWCRLTGALATACGDDGVRVFSEDPTADPEQPIFALSAHVPKAHNQDVNCVSWNPKEAGLLATCSDNGEFAIWKYNSA</sequence>
<accession>Q6P0D9</accession>
<accession>B0S611</accession>
<accession>Q803C8</accession>
<dbReference type="EMBL" id="BX323451">
    <property type="protein sequence ID" value="CAQ13300.1"/>
    <property type="molecule type" value="Genomic_DNA"/>
</dbReference>
<dbReference type="EMBL" id="BC044534">
    <property type="protein sequence ID" value="AAH44534.1"/>
    <property type="molecule type" value="mRNA"/>
</dbReference>
<dbReference type="EMBL" id="BC065658">
    <property type="protein sequence ID" value="AAH65658.1"/>
    <property type="molecule type" value="mRNA"/>
</dbReference>
<dbReference type="EMBL" id="BC171538">
    <property type="protein sequence ID" value="AAI71538.1"/>
    <property type="molecule type" value="mRNA"/>
</dbReference>
<dbReference type="EMBL" id="BC171540">
    <property type="protein sequence ID" value="AAI71540.1"/>
    <property type="molecule type" value="mRNA"/>
</dbReference>
<dbReference type="RefSeq" id="NP_956441.2">
    <property type="nucleotide sequence ID" value="NM_200147.2"/>
</dbReference>
<dbReference type="SMR" id="Q6P0D9"/>
<dbReference type="FunCoup" id="Q6P0D9">
    <property type="interactions" value="1307"/>
</dbReference>
<dbReference type="STRING" id="7955.ENSDARP00000076693"/>
<dbReference type="PaxDb" id="7955-ENSDARP00000076693"/>
<dbReference type="Ensembl" id="ENSDART00000082256">
    <property type="protein sequence ID" value="ENSDARP00000076693"/>
    <property type="gene ID" value="ENSDARG00000059212"/>
</dbReference>
<dbReference type="GeneID" id="795104"/>
<dbReference type="KEGG" id="dre:795104"/>
<dbReference type="AGR" id="ZFIN:ZDB-GENE-040426-839"/>
<dbReference type="CTD" id="9391"/>
<dbReference type="ZFIN" id="ZDB-GENE-040426-839">
    <property type="gene designation" value="ciao1"/>
</dbReference>
<dbReference type="eggNOG" id="KOG0645">
    <property type="taxonomic scope" value="Eukaryota"/>
</dbReference>
<dbReference type="HOGENOM" id="CLU_000288_57_8_1"/>
<dbReference type="InParanoid" id="Q6P0D9"/>
<dbReference type="OMA" id="IREIRWS"/>
<dbReference type="OrthoDB" id="284782at2759"/>
<dbReference type="PhylomeDB" id="Q6P0D9"/>
<dbReference type="TreeFam" id="TF318181"/>
<dbReference type="PRO" id="PR:Q6P0D9"/>
<dbReference type="Proteomes" id="UP000000437">
    <property type="component" value="Chromosome 8"/>
</dbReference>
<dbReference type="Bgee" id="ENSDARG00000059212">
    <property type="expression patterns" value="Expressed in spleen and 27 other cell types or tissues"/>
</dbReference>
<dbReference type="GO" id="GO:0097361">
    <property type="term" value="C:cytosolic [4Fe-4S] assembly targeting complex"/>
    <property type="evidence" value="ECO:0000250"/>
    <property type="project" value="UniProtKB"/>
</dbReference>
<dbReference type="GO" id="GO:0016226">
    <property type="term" value="P:iron-sulfur cluster assembly"/>
    <property type="evidence" value="ECO:0000318"/>
    <property type="project" value="GO_Central"/>
</dbReference>
<dbReference type="GO" id="GO:0051604">
    <property type="term" value="P:protein maturation"/>
    <property type="evidence" value="ECO:0000250"/>
    <property type="project" value="UniProtKB"/>
</dbReference>
<dbReference type="CDD" id="cd00200">
    <property type="entry name" value="WD40"/>
    <property type="match status" value="1"/>
</dbReference>
<dbReference type="FunFam" id="2.130.10.10:FF:000136">
    <property type="entry name" value="Probable cytosolic iron-sulfur protein assembly protein CIAO1"/>
    <property type="match status" value="1"/>
</dbReference>
<dbReference type="Gene3D" id="2.130.10.10">
    <property type="entry name" value="YVTN repeat-like/Quinoprotein amine dehydrogenase"/>
    <property type="match status" value="1"/>
</dbReference>
<dbReference type="HAMAP" id="MF_03037">
    <property type="entry name" value="ciao1"/>
    <property type="match status" value="1"/>
</dbReference>
<dbReference type="InterPro" id="IPR028608">
    <property type="entry name" value="CIAO1/Cia1"/>
</dbReference>
<dbReference type="InterPro" id="IPR015943">
    <property type="entry name" value="WD40/YVTN_repeat-like_dom_sf"/>
</dbReference>
<dbReference type="InterPro" id="IPR019775">
    <property type="entry name" value="WD40_repeat_CS"/>
</dbReference>
<dbReference type="InterPro" id="IPR036322">
    <property type="entry name" value="WD40_repeat_dom_sf"/>
</dbReference>
<dbReference type="InterPro" id="IPR001680">
    <property type="entry name" value="WD40_rpt"/>
</dbReference>
<dbReference type="PANTHER" id="PTHR19920:SF0">
    <property type="entry name" value="CYTOSOLIC IRON-SULFUR PROTEIN ASSEMBLY PROTEIN CIAO1-RELATED"/>
    <property type="match status" value="1"/>
</dbReference>
<dbReference type="PANTHER" id="PTHR19920">
    <property type="entry name" value="WD40 PROTEIN CIAO1"/>
    <property type="match status" value="1"/>
</dbReference>
<dbReference type="Pfam" id="PF00400">
    <property type="entry name" value="WD40"/>
    <property type="match status" value="6"/>
</dbReference>
<dbReference type="SMART" id="SM00320">
    <property type="entry name" value="WD40"/>
    <property type="match status" value="7"/>
</dbReference>
<dbReference type="SUPFAM" id="SSF50978">
    <property type="entry name" value="WD40 repeat-like"/>
    <property type="match status" value="1"/>
</dbReference>
<dbReference type="PROSITE" id="PS00678">
    <property type="entry name" value="WD_REPEATS_1"/>
    <property type="match status" value="1"/>
</dbReference>
<dbReference type="PROSITE" id="PS50082">
    <property type="entry name" value="WD_REPEATS_2"/>
    <property type="match status" value="6"/>
</dbReference>
<dbReference type="PROSITE" id="PS50294">
    <property type="entry name" value="WD_REPEATS_REGION"/>
    <property type="match status" value="1"/>
</dbReference>
<organism>
    <name type="scientific">Danio rerio</name>
    <name type="common">Zebrafish</name>
    <name type="synonym">Brachydanio rerio</name>
    <dbReference type="NCBI Taxonomy" id="7955"/>
    <lineage>
        <taxon>Eukaryota</taxon>
        <taxon>Metazoa</taxon>
        <taxon>Chordata</taxon>
        <taxon>Craniata</taxon>
        <taxon>Vertebrata</taxon>
        <taxon>Euteleostomi</taxon>
        <taxon>Actinopterygii</taxon>
        <taxon>Neopterygii</taxon>
        <taxon>Teleostei</taxon>
        <taxon>Ostariophysi</taxon>
        <taxon>Cypriniformes</taxon>
        <taxon>Danionidae</taxon>
        <taxon>Danioninae</taxon>
        <taxon>Danio</taxon>
    </lineage>
</organism>
<comment type="function">
    <text evidence="1">Key component of the cytosolic iron-sulfur protein assembly (CIA) complex, a multiprotein complex that mediates the incorporation of iron-sulfur cluster into extramitochondrial Fe/S proteins.</text>
</comment>
<comment type="subunit">
    <text evidence="1">Component of the CIA complex.</text>
</comment>
<comment type="similarity">
    <text evidence="1">Belongs to the WD repeat CIA1 family.</text>
</comment>
<protein>
    <recommendedName>
        <fullName evidence="1">Probable cytosolic iron-sulfur protein assembly protein ciao1</fullName>
    </recommendedName>
    <alternativeName>
        <fullName evidence="1">WD repeat-containing protein 39</fullName>
    </alternativeName>
</protein>
<proteinExistence type="evidence at transcript level"/>
<gene>
    <name type="primary">ciao1</name>
    <name type="synonym">wdr39</name>
    <name type="ORF">si:dkey-49H9.1</name>
    <name type="ORF">zgc:55911</name>
    <name type="ORF">zgc:77394</name>
</gene>